<protein>
    <recommendedName>
        <fullName>Nucleoprotein</fullName>
    </recommendedName>
    <alternativeName>
        <fullName>Nucleocapsid protein</fullName>
        <shortName>Protein N</shortName>
    </alternativeName>
</protein>
<feature type="chain" id="PRO_0000222005" description="Nucleoprotein">
    <location>
        <begin position="1"/>
        <end position="258"/>
    </location>
</feature>
<gene>
    <name type="primary">N</name>
</gene>
<evidence type="ECO:0000250" key="1">
    <source>
        <dbReference type="UniProtKB" id="P16495"/>
    </source>
</evidence>
<evidence type="ECO:0000305" key="2"/>
<organismHost>
    <name type="scientific">Frankliniella occidentalis</name>
    <name type="common">Western flower thrips</name>
    <name type="synonym">Euthrips occidentalis</name>
    <dbReference type="NCBI Taxonomy" id="133901"/>
</organismHost>
<organismHost>
    <name type="scientific">Scirtothrips dorsalis</name>
    <name type="common">Chilli thrips</name>
    <dbReference type="NCBI Taxonomy" id="163899"/>
</organismHost>
<organismHost>
    <name type="scientific">Solanum lycopersicum</name>
    <name type="common">Tomato</name>
    <name type="synonym">Lycopersicon esculentum</name>
    <dbReference type="NCBI Taxonomy" id="4081"/>
</organismHost>
<organismHost>
    <name type="scientific">Thrips tabaci</name>
    <dbReference type="NCBI Taxonomy" id="161014"/>
</organismHost>
<sequence length="258" mass="28852">MSKVKLTKENIVSLLTQSEDVEFEEDQNQVAFNFKTFCQENLDLIKKMSITSCLTFLKNRQSIMKVVKQSDFTFGKVTIKKNSERVEAKDMTFRRLDSMIRVKLIEETANNENLAIIKAKIASHPLVQAYGLPLDDAKSVRLAIMLGGSIPLIASVDSLEMISVVLAIYQDSQVQELGIEPTKYNTKEALGKVCTVLKSKGFTMDDAQDNKGKEYAKILSSCNPNAKGSIAMDYYSDNLEKFYEMFGVKKEAKIAGVA</sequence>
<comment type="function">
    <text evidence="1">Encapsidates the genome protecting it from nucleases. The encapsidated genomic RNA is termed the nucleocapsid (NC) and serves as template for transcription and replication. The NC have a helical organization.</text>
</comment>
<comment type="subunit">
    <text evidence="1">Homotrimer. Binds the viral genomic RNA.</text>
</comment>
<comment type="subcellular location">
    <subcellularLocation>
        <location evidence="1">Virion</location>
    </subcellularLocation>
    <text evidence="1">Located inside the virion, complexed with the viral RNA.</text>
</comment>
<comment type="domain">
    <text evidence="1">The N-terminus and C-terminus are involved in homooligomerization and play an essential role in viral RNA synthesis.</text>
</comment>
<comment type="similarity">
    <text evidence="2">Belongs to the tospovirus nucleocapsid protein family.</text>
</comment>
<reference key="1">
    <citation type="journal article" date="1993" name="J. Gen. Virol.">
        <title>Classification of tospoviruses based on phylogeny of nucleoprotein gene sequences.</title>
        <authorList>
            <person name="de Avila A.C."/>
            <person name="de Haan P."/>
            <person name="Kormelink R."/>
            <person name="Resende R.O."/>
            <person name="Goldbach R.W."/>
            <person name="Peters D."/>
        </authorList>
    </citation>
    <scope>NUCLEOTIDE SEQUENCE [GENOMIC RNA]</scope>
</reference>
<proteinExistence type="inferred from homology"/>
<accession>P36294</accession>
<dbReference type="EMBL" id="S54327">
    <property type="protein sequence ID" value="AAB25255.2"/>
    <property type="molecule type" value="Genomic_RNA"/>
</dbReference>
<dbReference type="PIR" id="JQ1876">
    <property type="entry name" value="JQ1876"/>
</dbReference>
<dbReference type="SMR" id="P36294"/>
<dbReference type="GO" id="GO:0019029">
    <property type="term" value="C:helical viral capsid"/>
    <property type="evidence" value="ECO:0007669"/>
    <property type="project" value="UniProtKB-KW"/>
</dbReference>
<dbReference type="GO" id="GO:1990904">
    <property type="term" value="C:ribonucleoprotein complex"/>
    <property type="evidence" value="ECO:0007669"/>
    <property type="project" value="UniProtKB-KW"/>
</dbReference>
<dbReference type="GO" id="GO:0019013">
    <property type="term" value="C:viral nucleocapsid"/>
    <property type="evidence" value="ECO:0007669"/>
    <property type="project" value="UniProtKB-KW"/>
</dbReference>
<dbReference type="GO" id="GO:0003723">
    <property type="term" value="F:RNA binding"/>
    <property type="evidence" value="ECO:0007669"/>
    <property type="project" value="UniProtKB-KW"/>
</dbReference>
<dbReference type="InterPro" id="IPR002517">
    <property type="entry name" value="Tospo_nucleocap"/>
</dbReference>
<dbReference type="Pfam" id="PF01533">
    <property type="entry name" value="Tospo_nucleocap"/>
    <property type="match status" value="1"/>
</dbReference>
<dbReference type="PIRSF" id="PIRSF003948">
    <property type="entry name" value="N_TospoV"/>
    <property type="match status" value="1"/>
</dbReference>
<keyword id="KW-0167">Capsid protein</keyword>
<keyword id="KW-1139">Helical capsid protein</keyword>
<keyword id="KW-0687">Ribonucleoprotein</keyword>
<keyword id="KW-0694">RNA-binding</keyword>
<keyword id="KW-0543">Viral nucleoprotein</keyword>
<keyword id="KW-0946">Virion</keyword>
<organism>
    <name type="scientific">Tomato spotted wilt virus (strain SA-05)</name>
    <name type="common">TSWV</name>
    <name type="synonym">Groundnut ringspot virus</name>
    <dbReference type="NCBI Taxonomy" id="12675"/>
    <lineage>
        <taxon>Viruses</taxon>
        <taxon>Riboviria</taxon>
        <taxon>Orthornavirae</taxon>
        <taxon>Negarnaviricota</taxon>
        <taxon>Polyploviricotina</taxon>
        <taxon>Ellioviricetes</taxon>
        <taxon>Bunyavirales</taxon>
        <taxon>Tospoviridae</taxon>
        <taxon>Orthotospovirus</taxon>
        <taxon>Orthotospovirus arachianuli</taxon>
    </lineage>
</organism>
<name>NCAP_TSWVS</name>